<sequence>MAKSGKKYIQALSKVNKLKSYNIDDAISLLKEIKFVKFDETIDVSVNLNLKKNHTVRETLVLPHQFMKEKRILVFAKGEKAEEAREFGAAYVGDDDLINKIKDGFSDFDVVVATPDMMKDVGKLGPILGKRGLMPNPKTQTITNDLKGTIASLKKGRTEFRANKNGVINFSVGKSSMDSKKIRENYDEFIKELLKRRPSDLKGTFVDSVYVSSTMGPSVKIDFV</sequence>
<protein>
    <recommendedName>
        <fullName evidence="1">Large ribosomal subunit protein uL1</fullName>
    </recommendedName>
    <alternativeName>
        <fullName evidence="2">50S ribosomal protein L1</fullName>
    </alternativeName>
</protein>
<reference key="1">
    <citation type="journal article" date="2008" name="PLoS Genet.">
        <title>The genome of Borrelia recurrentis, the agent of deadly louse-borne relapsing fever, is a degraded subset of tick-borne Borrelia duttonii.</title>
        <authorList>
            <person name="Lescot M."/>
            <person name="Audic S."/>
            <person name="Robert C."/>
            <person name="Nguyen T.T."/>
            <person name="Blanc G."/>
            <person name="Cutler S.J."/>
            <person name="Wincker P."/>
            <person name="Couloux A."/>
            <person name="Claverie J.-M."/>
            <person name="Raoult D."/>
            <person name="Drancourt M."/>
        </authorList>
    </citation>
    <scope>NUCLEOTIDE SEQUENCE [LARGE SCALE GENOMIC DNA]</scope>
    <source>
        <strain>A1</strain>
    </source>
</reference>
<keyword id="KW-0678">Repressor</keyword>
<keyword id="KW-0687">Ribonucleoprotein</keyword>
<keyword id="KW-0689">Ribosomal protein</keyword>
<keyword id="KW-0694">RNA-binding</keyword>
<keyword id="KW-0699">rRNA-binding</keyword>
<keyword id="KW-0810">Translation regulation</keyword>
<keyword id="KW-0820">tRNA-binding</keyword>
<dbReference type="EMBL" id="CP000993">
    <property type="protein sequence ID" value="ACH94634.1"/>
    <property type="molecule type" value="Genomic_DNA"/>
</dbReference>
<dbReference type="RefSeq" id="WP_012538869.1">
    <property type="nucleotide sequence ID" value="NZ_CP169983.1"/>
</dbReference>
<dbReference type="SMR" id="B5RRK0"/>
<dbReference type="KEGG" id="bre:BRE_390"/>
<dbReference type="HOGENOM" id="CLU_062853_0_0_12"/>
<dbReference type="Proteomes" id="UP000000612">
    <property type="component" value="Chromosome"/>
</dbReference>
<dbReference type="GO" id="GO:0015934">
    <property type="term" value="C:large ribosomal subunit"/>
    <property type="evidence" value="ECO:0007669"/>
    <property type="project" value="InterPro"/>
</dbReference>
<dbReference type="GO" id="GO:0019843">
    <property type="term" value="F:rRNA binding"/>
    <property type="evidence" value="ECO:0007669"/>
    <property type="project" value="UniProtKB-UniRule"/>
</dbReference>
<dbReference type="GO" id="GO:0003735">
    <property type="term" value="F:structural constituent of ribosome"/>
    <property type="evidence" value="ECO:0007669"/>
    <property type="project" value="InterPro"/>
</dbReference>
<dbReference type="GO" id="GO:0000049">
    <property type="term" value="F:tRNA binding"/>
    <property type="evidence" value="ECO:0007669"/>
    <property type="project" value="UniProtKB-KW"/>
</dbReference>
<dbReference type="GO" id="GO:0006417">
    <property type="term" value="P:regulation of translation"/>
    <property type="evidence" value="ECO:0007669"/>
    <property type="project" value="UniProtKB-KW"/>
</dbReference>
<dbReference type="GO" id="GO:0006412">
    <property type="term" value="P:translation"/>
    <property type="evidence" value="ECO:0007669"/>
    <property type="project" value="UniProtKB-UniRule"/>
</dbReference>
<dbReference type="CDD" id="cd00403">
    <property type="entry name" value="Ribosomal_L1"/>
    <property type="match status" value="1"/>
</dbReference>
<dbReference type="FunFam" id="3.40.50.790:FF:000001">
    <property type="entry name" value="50S ribosomal protein L1"/>
    <property type="match status" value="1"/>
</dbReference>
<dbReference type="Gene3D" id="3.30.190.20">
    <property type="match status" value="1"/>
</dbReference>
<dbReference type="Gene3D" id="3.40.50.790">
    <property type="match status" value="1"/>
</dbReference>
<dbReference type="HAMAP" id="MF_01318_B">
    <property type="entry name" value="Ribosomal_uL1_B"/>
    <property type="match status" value="1"/>
</dbReference>
<dbReference type="InterPro" id="IPR005878">
    <property type="entry name" value="Ribosom_uL1_bac-type"/>
</dbReference>
<dbReference type="InterPro" id="IPR002143">
    <property type="entry name" value="Ribosomal_uL1"/>
</dbReference>
<dbReference type="InterPro" id="IPR023674">
    <property type="entry name" value="Ribosomal_uL1-like"/>
</dbReference>
<dbReference type="InterPro" id="IPR028364">
    <property type="entry name" value="Ribosomal_uL1/biogenesis"/>
</dbReference>
<dbReference type="InterPro" id="IPR016095">
    <property type="entry name" value="Ribosomal_uL1_3-a/b-sand"/>
</dbReference>
<dbReference type="InterPro" id="IPR023673">
    <property type="entry name" value="Ribosomal_uL1_CS"/>
</dbReference>
<dbReference type="NCBIfam" id="TIGR01169">
    <property type="entry name" value="rplA_bact"/>
    <property type="match status" value="1"/>
</dbReference>
<dbReference type="PANTHER" id="PTHR36427">
    <property type="entry name" value="54S RIBOSOMAL PROTEIN L1, MITOCHONDRIAL"/>
    <property type="match status" value="1"/>
</dbReference>
<dbReference type="PANTHER" id="PTHR36427:SF3">
    <property type="entry name" value="LARGE RIBOSOMAL SUBUNIT PROTEIN UL1M"/>
    <property type="match status" value="1"/>
</dbReference>
<dbReference type="Pfam" id="PF00687">
    <property type="entry name" value="Ribosomal_L1"/>
    <property type="match status" value="1"/>
</dbReference>
<dbReference type="PIRSF" id="PIRSF002155">
    <property type="entry name" value="Ribosomal_L1"/>
    <property type="match status" value="1"/>
</dbReference>
<dbReference type="SUPFAM" id="SSF56808">
    <property type="entry name" value="Ribosomal protein L1"/>
    <property type="match status" value="1"/>
</dbReference>
<dbReference type="PROSITE" id="PS01199">
    <property type="entry name" value="RIBOSOMAL_L1"/>
    <property type="match status" value="1"/>
</dbReference>
<organism>
    <name type="scientific">Borrelia recurrentis (strain A1)</name>
    <dbReference type="NCBI Taxonomy" id="412418"/>
    <lineage>
        <taxon>Bacteria</taxon>
        <taxon>Pseudomonadati</taxon>
        <taxon>Spirochaetota</taxon>
        <taxon>Spirochaetia</taxon>
        <taxon>Spirochaetales</taxon>
        <taxon>Borreliaceae</taxon>
        <taxon>Borrelia</taxon>
    </lineage>
</organism>
<evidence type="ECO:0000255" key="1">
    <source>
        <dbReference type="HAMAP-Rule" id="MF_01318"/>
    </source>
</evidence>
<evidence type="ECO:0000305" key="2"/>
<feature type="chain" id="PRO_1000141368" description="Large ribosomal subunit protein uL1">
    <location>
        <begin position="1"/>
        <end position="224"/>
    </location>
</feature>
<proteinExistence type="inferred from homology"/>
<accession>B5RRK0</accession>
<gene>
    <name evidence="1" type="primary">rplA</name>
    <name type="ordered locus">BRE_390</name>
</gene>
<comment type="function">
    <text evidence="1">Binds directly to 23S rRNA. The L1 stalk is quite mobile in the ribosome, and is involved in E site tRNA release.</text>
</comment>
<comment type="function">
    <text evidence="1">Protein L1 is also a translational repressor protein, it controls the translation of the L11 operon by binding to its mRNA.</text>
</comment>
<comment type="subunit">
    <text evidence="1">Part of the 50S ribosomal subunit.</text>
</comment>
<comment type="similarity">
    <text evidence="1">Belongs to the universal ribosomal protein uL1 family.</text>
</comment>
<name>RL1_BORRA</name>